<feature type="chain" id="PRO_1000014940" description="Chaperone protein HtpG">
    <location>
        <begin position="1"/>
        <end position="634"/>
    </location>
</feature>
<feature type="region of interest" description="A; substrate-binding" evidence="1">
    <location>
        <begin position="1"/>
        <end position="342"/>
    </location>
</feature>
<feature type="region of interest" description="B" evidence="1">
    <location>
        <begin position="343"/>
        <end position="559"/>
    </location>
</feature>
<feature type="region of interest" description="C" evidence="1">
    <location>
        <begin position="560"/>
        <end position="634"/>
    </location>
</feature>
<gene>
    <name evidence="1" type="primary">htpG</name>
    <name type="ordered locus">Pmen_2491</name>
</gene>
<keyword id="KW-0067">ATP-binding</keyword>
<keyword id="KW-0143">Chaperone</keyword>
<keyword id="KW-0963">Cytoplasm</keyword>
<keyword id="KW-0547">Nucleotide-binding</keyword>
<keyword id="KW-0346">Stress response</keyword>
<sequence length="634" mass="71503">MSVETQKETLGFQTEVKQLLHLMIHSLYSNKEIFLRELISNASDAADKLRFEALAKPELLEGGAELKIRLSFDKDAKTVTLEDNGIGMSRDEVIAHLGTIAKSGTADFLKNLSGDQKKDSHLIGQFGVGFYSAFIVADKVDVFTRRAGLSAAEGVHWSSKGEGEFEVATVEKAERGTRIVLHLKSGEEEFADGWRLRNIVKKYSDHIALPIELPKEHYGEEKDKPAEVEWETVNRASALWTRPRAEVKDEEYQEFYKHVAHDFENPLTWSHNKVEGKLEYTSLLYVPGRAPFDLYHREAPKGLKLYVQRVFIMDQADEFLPLYLRFIKGVVDSNDLSLNVSREILQKDPVIDSMKSALTKRVLDMLEKLAKDKPEEYKAFWKAFGQVLKEGPAEDFANKEKIAGLLRFASTAGEGDEQSVSLADYLGRVKDGQDKIYYLTGESYAQIKNSPHLEVFRKKGIEVLLLTDRIDEWLMSYLTEFDGKQFVDVARGDLDLGKLDSEEDKKAQEEVAKAKEGLIERLKGALGEQVKEVRVSHRLTDSPAILAIGEQDLGLQMRQILEASGQKVPESKPIFEFNPSHPLIERLDAEADEDRFVDLTHILFDQAALAAGDSLKDPAAYVQRLNKLLVELSA</sequence>
<organism>
    <name type="scientific">Ectopseudomonas mendocina (strain ymp)</name>
    <name type="common">Pseudomonas mendocina</name>
    <dbReference type="NCBI Taxonomy" id="399739"/>
    <lineage>
        <taxon>Bacteria</taxon>
        <taxon>Pseudomonadati</taxon>
        <taxon>Pseudomonadota</taxon>
        <taxon>Gammaproteobacteria</taxon>
        <taxon>Pseudomonadales</taxon>
        <taxon>Pseudomonadaceae</taxon>
        <taxon>Ectopseudomonas</taxon>
    </lineage>
</organism>
<comment type="function">
    <text evidence="1">Molecular chaperone. Has ATPase activity.</text>
</comment>
<comment type="subunit">
    <text evidence="1">Homodimer.</text>
</comment>
<comment type="subcellular location">
    <subcellularLocation>
        <location evidence="1">Cytoplasm</location>
    </subcellularLocation>
</comment>
<comment type="similarity">
    <text evidence="1">Belongs to the heat shock protein 90 family.</text>
</comment>
<accession>A4XV81</accession>
<proteinExistence type="inferred from homology"/>
<protein>
    <recommendedName>
        <fullName evidence="1">Chaperone protein HtpG</fullName>
    </recommendedName>
    <alternativeName>
        <fullName evidence="1">Heat shock protein HtpG</fullName>
    </alternativeName>
    <alternativeName>
        <fullName evidence="1">High temperature protein G</fullName>
    </alternativeName>
</protein>
<evidence type="ECO:0000255" key="1">
    <source>
        <dbReference type="HAMAP-Rule" id="MF_00505"/>
    </source>
</evidence>
<reference key="1">
    <citation type="submission" date="2007-04" db="EMBL/GenBank/DDBJ databases">
        <title>Complete sequence of Pseudomonas mendocina ymp.</title>
        <authorList>
            <consortium name="US DOE Joint Genome Institute"/>
            <person name="Copeland A."/>
            <person name="Lucas S."/>
            <person name="Lapidus A."/>
            <person name="Barry K."/>
            <person name="Glavina del Rio T."/>
            <person name="Dalin E."/>
            <person name="Tice H."/>
            <person name="Pitluck S."/>
            <person name="Kiss H."/>
            <person name="Brettin T."/>
            <person name="Detter J.C."/>
            <person name="Bruce D."/>
            <person name="Han C."/>
            <person name="Schmutz J."/>
            <person name="Larimer F."/>
            <person name="Land M."/>
            <person name="Hauser L."/>
            <person name="Kyrpides N."/>
            <person name="Mikhailova N."/>
            <person name="Hersman L."/>
            <person name="Dubois J."/>
            <person name="Maurice P."/>
            <person name="Richardson P."/>
        </authorList>
    </citation>
    <scope>NUCLEOTIDE SEQUENCE [LARGE SCALE GENOMIC DNA]</scope>
    <source>
        <strain>ymp</strain>
    </source>
</reference>
<dbReference type="EMBL" id="CP000680">
    <property type="protein sequence ID" value="ABP85247.1"/>
    <property type="molecule type" value="Genomic_DNA"/>
</dbReference>
<dbReference type="SMR" id="A4XV81"/>
<dbReference type="STRING" id="399739.Pmen_2491"/>
<dbReference type="KEGG" id="pmy:Pmen_2491"/>
<dbReference type="PATRIC" id="fig|399739.8.peg.2517"/>
<dbReference type="eggNOG" id="COG0326">
    <property type="taxonomic scope" value="Bacteria"/>
</dbReference>
<dbReference type="HOGENOM" id="CLU_006684_3_0_6"/>
<dbReference type="OrthoDB" id="9802640at2"/>
<dbReference type="GO" id="GO:0005737">
    <property type="term" value="C:cytoplasm"/>
    <property type="evidence" value="ECO:0007669"/>
    <property type="project" value="UniProtKB-SubCell"/>
</dbReference>
<dbReference type="GO" id="GO:0005524">
    <property type="term" value="F:ATP binding"/>
    <property type="evidence" value="ECO:0007669"/>
    <property type="project" value="UniProtKB-UniRule"/>
</dbReference>
<dbReference type="GO" id="GO:0016887">
    <property type="term" value="F:ATP hydrolysis activity"/>
    <property type="evidence" value="ECO:0007669"/>
    <property type="project" value="InterPro"/>
</dbReference>
<dbReference type="GO" id="GO:0140662">
    <property type="term" value="F:ATP-dependent protein folding chaperone"/>
    <property type="evidence" value="ECO:0007669"/>
    <property type="project" value="InterPro"/>
</dbReference>
<dbReference type="GO" id="GO:0051082">
    <property type="term" value="F:unfolded protein binding"/>
    <property type="evidence" value="ECO:0007669"/>
    <property type="project" value="UniProtKB-UniRule"/>
</dbReference>
<dbReference type="CDD" id="cd16927">
    <property type="entry name" value="HATPase_Hsp90-like"/>
    <property type="match status" value="1"/>
</dbReference>
<dbReference type="FunFam" id="3.30.230.80:FF:000002">
    <property type="entry name" value="Molecular chaperone HtpG"/>
    <property type="match status" value="1"/>
</dbReference>
<dbReference type="FunFam" id="3.30.565.10:FF:000009">
    <property type="entry name" value="Molecular chaperone HtpG"/>
    <property type="match status" value="1"/>
</dbReference>
<dbReference type="Gene3D" id="3.30.230.80">
    <property type="match status" value="1"/>
</dbReference>
<dbReference type="Gene3D" id="3.40.50.11260">
    <property type="match status" value="1"/>
</dbReference>
<dbReference type="Gene3D" id="1.20.120.790">
    <property type="entry name" value="Heat shock protein 90, C-terminal domain"/>
    <property type="match status" value="1"/>
</dbReference>
<dbReference type="Gene3D" id="3.30.565.10">
    <property type="entry name" value="Histidine kinase-like ATPase, C-terminal domain"/>
    <property type="match status" value="1"/>
</dbReference>
<dbReference type="HAMAP" id="MF_00505">
    <property type="entry name" value="HSP90"/>
    <property type="match status" value="1"/>
</dbReference>
<dbReference type="InterPro" id="IPR036890">
    <property type="entry name" value="HATPase_C_sf"/>
</dbReference>
<dbReference type="InterPro" id="IPR019805">
    <property type="entry name" value="Heat_shock_protein_90_CS"/>
</dbReference>
<dbReference type="InterPro" id="IPR037196">
    <property type="entry name" value="HSP90_C"/>
</dbReference>
<dbReference type="InterPro" id="IPR001404">
    <property type="entry name" value="Hsp90_fam"/>
</dbReference>
<dbReference type="InterPro" id="IPR020575">
    <property type="entry name" value="Hsp90_N"/>
</dbReference>
<dbReference type="InterPro" id="IPR020568">
    <property type="entry name" value="Ribosomal_Su5_D2-typ_SF"/>
</dbReference>
<dbReference type="NCBIfam" id="NF003555">
    <property type="entry name" value="PRK05218.1"/>
    <property type="match status" value="1"/>
</dbReference>
<dbReference type="PANTHER" id="PTHR11528">
    <property type="entry name" value="HEAT SHOCK PROTEIN 90 FAMILY MEMBER"/>
    <property type="match status" value="1"/>
</dbReference>
<dbReference type="Pfam" id="PF13589">
    <property type="entry name" value="HATPase_c_3"/>
    <property type="match status" value="1"/>
</dbReference>
<dbReference type="Pfam" id="PF00183">
    <property type="entry name" value="HSP90"/>
    <property type="match status" value="1"/>
</dbReference>
<dbReference type="PIRSF" id="PIRSF002583">
    <property type="entry name" value="Hsp90"/>
    <property type="match status" value="1"/>
</dbReference>
<dbReference type="PRINTS" id="PR00775">
    <property type="entry name" value="HEATSHOCK90"/>
</dbReference>
<dbReference type="SMART" id="SM00387">
    <property type="entry name" value="HATPase_c"/>
    <property type="match status" value="1"/>
</dbReference>
<dbReference type="SUPFAM" id="SSF55874">
    <property type="entry name" value="ATPase domain of HSP90 chaperone/DNA topoisomerase II/histidine kinase"/>
    <property type="match status" value="1"/>
</dbReference>
<dbReference type="SUPFAM" id="SSF110942">
    <property type="entry name" value="HSP90 C-terminal domain"/>
    <property type="match status" value="1"/>
</dbReference>
<dbReference type="SUPFAM" id="SSF54211">
    <property type="entry name" value="Ribosomal protein S5 domain 2-like"/>
    <property type="match status" value="1"/>
</dbReference>
<dbReference type="PROSITE" id="PS00298">
    <property type="entry name" value="HSP90"/>
    <property type="match status" value="1"/>
</dbReference>
<name>HTPG_ECTM1</name>